<dbReference type="EMBL" id="CP001127">
    <property type="protein sequence ID" value="ACF89004.1"/>
    <property type="molecule type" value="Genomic_DNA"/>
</dbReference>
<dbReference type="RefSeq" id="WP_000609650.1">
    <property type="nucleotide sequence ID" value="NC_011094.1"/>
</dbReference>
<dbReference type="SMR" id="B4TSD5"/>
<dbReference type="KEGG" id="sew:SeSA_A4610"/>
<dbReference type="HOGENOM" id="CLU_168367_0_0_6"/>
<dbReference type="Proteomes" id="UP000001865">
    <property type="component" value="Chromosome"/>
</dbReference>
<dbReference type="GO" id="GO:0045283">
    <property type="term" value="C:fumarate reductase complex"/>
    <property type="evidence" value="ECO:0007669"/>
    <property type="project" value="UniProtKB-UniRule"/>
</dbReference>
<dbReference type="GO" id="GO:0005886">
    <property type="term" value="C:plasma membrane"/>
    <property type="evidence" value="ECO:0007669"/>
    <property type="project" value="UniProtKB-SubCell"/>
</dbReference>
<dbReference type="GO" id="GO:0000104">
    <property type="term" value="F:succinate dehydrogenase activity"/>
    <property type="evidence" value="ECO:0007669"/>
    <property type="project" value="UniProtKB-UniRule"/>
</dbReference>
<dbReference type="GO" id="GO:0006106">
    <property type="term" value="P:fumarate metabolic process"/>
    <property type="evidence" value="ECO:0007669"/>
    <property type="project" value="InterPro"/>
</dbReference>
<dbReference type="CDD" id="cd00547">
    <property type="entry name" value="QFR_TypeD_subunitD"/>
    <property type="match status" value="1"/>
</dbReference>
<dbReference type="FunFam" id="1.20.1300.10:FF:000002">
    <property type="entry name" value="Fumarate reductase subunit D"/>
    <property type="match status" value="1"/>
</dbReference>
<dbReference type="Gene3D" id="1.20.1300.10">
    <property type="entry name" value="Fumarate reductase/succinate dehydrogenase, transmembrane subunit"/>
    <property type="match status" value="1"/>
</dbReference>
<dbReference type="HAMAP" id="MF_00709">
    <property type="entry name" value="Fumarate_red_D"/>
    <property type="match status" value="1"/>
</dbReference>
<dbReference type="InterPro" id="IPR003418">
    <property type="entry name" value="Fumarate_red_D"/>
</dbReference>
<dbReference type="InterPro" id="IPR034804">
    <property type="entry name" value="SQR/QFR_C/D"/>
</dbReference>
<dbReference type="NCBIfam" id="NF003977">
    <property type="entry name" value="PRK05470.1-1"/>
    <property type="match status" value="1"/>
</dbReference>
<dbReference type="Pfam" id="PF02313">
    <property type="entry name" value="Fumarate_red_D"/>
    <property type="match status" value="1"/>
</dbReference>
<dbReference type="PIRSF" id="PIRSF000179">
    <property type="entry name" value="FrdD"/>
    <property type="match status" value="1"/>
</dbReference>
<dbReference type="SUPFAM" id="SSF81343">
    <property type="entry name" value="Fumarate reductase respiratory complex transmembrane subunits"/>
    <property type="match status" value="1"/>
</dbReference>
<comment type="function">
    <text evidence="1">Two distinct, membrane-bound, FAD-containing enzymes are responsible for the catalysis of fumarate and succinate interconversion; fumarate reductase is used in anaerobic growth, and succinate dehydrogenase is used in aerobic growth. Anchors the catalytic components of the fumarate reductase complex to the cell inner membrane, binds quinones.</text>
</comment>
<comment type="subunit">
    <text evidence="1">Part of an enzyme complex containing four subunits: a flavoprotein (FrdA), an iron-sulfur protein (FrdB), and two hydrophobic anchor proteins (FrdC and FrdD).</text>
</comment>
<comment type="subcellular location">
    <subcellularLocation>
        <location evidence="1">Cell inner membrane</location>
        <topology evidence="1">Multi-pass membrane protein</topology>
    </subcellularLocation>
</comment>
<comment type="similarity">
    <text evidence="1">Belongs to the FrdD family.</text>
</comment>
<sequence>MINPNPKRSDEPVFWGLFGAGGMWGAIIAPVIVLLVGIMLPLGLFPGDALSFERVLTFAQSFIGRVFLFLMIVLPLWCGLHRMHHAMHDLKIHVPAGKWVFYGLAAILTVVTAIGVITL</sequence>
<organism>
    <name type="scientific">Salmonella schwarzengrund (strain CVM19633)</name>
    <dbReference type="NCBI Taxonomy" id="439843"/>
    <lineage>
        <taxon>Bacteria</taxon>
        <taxon>Pseudomonadati</taxon>
        <taxon>Pseudomonadota</taxon>
        <taxon>Gammaproteobacteria</taxon>
        <taxon>Enterobacterales</taxon>
        <taxon>Enterobacteriaceae</taxon>
        <taxon>Salmonella</taxon>
    </lineage>
</organism>
<evidence type="ECO:0000255" key="1">
    <source>
        <dbReference type="HAMAP-Rule" id="MF_00709"/>
    </source>
</evidence>
<protein>
    <recommendedName>
        <fullName evidence="1">Fumarate reductase subunit D</fullName>
    </recommendedName>
    <alternativeName>
        <fullName evidence="1">Fumarate reductase 13 kDa hydrophobic protein</fullName>
    </alternativeName>
    <alternativeName>
        <fullName evidence="1">Quinol-fumarate reductase subunit D</fullName>
        <shortName evidence="1">QFR subunit D</shortName>
    </alternativeName>
</protein>
<gene>
    <name evidence="1" type="primary">frdD</name>
    <name type="ordered locus">SeSA_A4610</name>
</gene>
<proteinExistence type="inferred from homology"/>
<reference key="1">
    <citation type="journal article" date="2011" name="J. Bacteriol.">
        <title>Comparative genomics of 28 Salmonella enterica isolates: evidence for CRISPR-mediated adaptive sublineage evolution.</title>
        <authorList>
            <person name="Fricke W.F."/>
            <person name="Mammel M.K."/>
            <person name="McDermott P.F."/>
            <person name="Tartera C."/>
            <person name="White D.G."/>
            <person name="Leclerc J.E."/>
            <person name="Ravel J."/>
            <person name="Cebula T.A."/>
        </authorList>
    </citation>
    <scope>NUCLEOTIDE SEQUENCE [LARGE SCALE GENOMIC DNA]</scope>
    <source>
        <strain>CVM19633</strain>
    </source>
</reference>
<feature type="chain" id="PRO_1000132415" description="Fumarate reductase subunit D">
    <location>
        <begin position="1"/>
        <end position="119"/>
    </location>
</feature>
<feature type="transmembrane region" description="Helical" evidence="1">
    <location>
        <begin position="25"/>
        <end position="45"/>
    </location>
</feature>
<feature type="transmembrane region" description="Helical" evidence="1">
    <location>
        <begin position="61"/>
        <end position="81"/>
    </location>
</feature>
<feature type="transmembrane region" description="Helical" evidence="1">
    <location>
        <begin position="99"/>
        <end position="119"/>
    </location>
</feature>
<name>FRDD_SALSV</name>
<accession>B4TSD5</accession>
<keyword id="KW-0997">Cell inner membrane</keyword>
<keyword id="KW-1003">Cell membrane</keyword>
<keyword id="KW-0472">Membrane</keyword>
<keyword id="KW-0812">Transmembrane</keyword>
<keyword id="KW-1133">Transmembrane helix</keyword>